<name>RF1_NAUPA</name>
<proteinExistence type="inferred from homology"/>
<dbReference type="EMBL" id="CP001279">
    <property type="protein sequence ID" value="ACM93779.1"/>
    <property type="molecule type" value="Genomic_DNA"/>
</dbReference>
<dbReference type="RefSeq" id="WP_015902831.1">
    <property type="nucleotide sequence ID" value="NC_012115.1"/>
</dbReference>
<dbReference type="SMR" id="B9L5Z9"/>
<dbReference type="STRING" id="598659.NAMH_1395"/>
<dbReference type="KEGG" id="nam:NAMH_1395"/>
<dbReference type="eggNOG" id="COG0216">
    <property type="taxonomic scope" value="Bacteria"/>
</dbReference>
<dbReference type="HOGENOM" id="CLU_036856_0_1_7"/>
<dbReference type="OrthoDB" id="9806673at2"/>
<dbReference type="Proteomes" id="UP000000448">
    <property type="component" value="Chromosome"/>
</dbReference>
<dbReference type="GO" id="GO:0005737">
    <property type="term" value="C:cytoplasm"/>
    <property type="evidence" value="ECO:0007669"/>
    <property type="project" value="UniProtKB-SubCell"/>
</dbReference>
<dbReference type="GO" id="GO:0016149">
    <property type="term" value="F:translation release factor activity, codon specific"/>
    <property type="evidence" value="ECO:0007669"/>
    <property type="project" value="UniProtKB-UniRule"/>
</dbReference>
<dbReference type="FunFam" id="3.30.160.20:FF:000004">
    <property type="entry name" value="Peptide chain release factor 1"/>
    <property type="match status" value="1"/>
</dbReference>
<dbReference type="FunFam" id="3.30.70.1660:FF:000002">
    <property type="entry name" value="Peptide chain release factor 1"/>
    <property type="match status" value="1"/>
</dbReference>
<dbReference type="FunFam" id="3.30.70.1660:FF:000004">
    <property type="entry name" value="Peptide chain release factor 1"/>
    <property type="match status" value="1"/>
</dbReference>
<dbReference type="Gene3D" id="3.30.160.20">
    <property type="match status" value="1"/>
</dbReference>
<dbReference type="Gene3D" id="3.30.70.1660">
    <property type="match status" value="2"/>
</dbReference>
<dbReference type="Gene3D" id="6.10.140.1950">
    <property type="match status" value="1"/>
</dbReference>
<dbReference type="HAMAP" id="MF_00093">
    <property type="entry name" value="Rel_fac_1"/>
    <property type="match status" value="1"/>
</dbReference>
<dbReference type="InterPro" id="IPR005139">
    <property type="entry name" value="PCRF"/>
</dbReference>
<dbReference type="InterPro" id="IPR000352">
    <property type="entry name" value="Pep_chain_release_fac_I"/>
</dbReference>
<dbReference type="InterPro" id="IPR045853">
    <property type="entry name" value="Pep_chain_release_fac_I_sf"/>
</dbReference>
<dbReference type="InterPro" id="IPR050057">
    <property type="entry name" value="Prokaryotic/Mito_RF"/>
</dbReference>
<dbReference type="InterPro" id="IPR004373">
    <property type="entry name" value="RF-1"/>
</dbReference>
<dbReference type="NCBIfam" id="TIGR00019">
    <property type="entry name" value="prfA"/>
    <property type="match status" value="1"/>
</dbReference>
<dbReference type="NCBIfam" id="NF001859">
    <property type="entry name" value="PRK00591.1"/>
    <property type="match status" value="1"/>
</dbReference>
<dbReference type="PANTHER" id="PTHR43804">
    <property type="entry name" value="LD18447P"/>
    <property type="match status" value="1"/>
</dbReference>
<dbReference type="PANTHER" id="PTHR43804:SF7">
    <property type="entry name" value="LD18447P"/>
    <property type="match status" value="1"/>
</dbReference>
<dbReference type="Pfam" id="PF03462">
    <property type="entry name" value="PCRF"/>
    <property type="match status" value="1"/>
</dbReference>
<dbReference type="Pfam" id="PF00472">
    <property type="entry name" value="RF-1"/>
    <property type="match status" value="1"/>
</dbReference>
<dbReference type="SMART" id="SM00937">
    <property type="entry name" value="PCRF"/>
    <property type="match status" value="1"/>
</dbReference>
<dbReference type="SUPFAM" id="SSF75620">
    <property type="entry name" value="Release factor"/>
    <property type="match status" value="1"/>
</dbReference>
<dbReference type="PROSITE" id="PS00745">
    <property type="entry name" value="RF_PROK_I"/>
    <property type="match status" value="1"/>
</dbReference>
<protein>
    <recommendedName>
        <fullName evidence="1">Peptide chain release factor 1</fullName>
        <shortName evidence="1">RF-1</shortName>
    </recommendedName>
</protein>
<gene>
    <name evidence="1" type="primary">prfA</name>
    <name type="ordered locus">NAMH_1395</name>
</gene>
<keyword id="KW-0963">Cytoplasm</keyword>
<keyword id="KW-0488">Methylation</keyword>
<keyword id="KW-0648">Protein biosynthesis</keyword>
<feature type="chain" id="PRO_1000193500" description="Peptide chain release factor 1">
    <location>
        <begin position="1"/>
        <end position="355"/>
    </location>
</feature>
<feature type="modified residue" description="N5-methylglutamine" evidence="1">
    <location>
        <position position="231"/>
    </location>
</feature>
<accession>B9L5Z9</accession>
<reference key="1">
    <citation type="journal article" date="2009" name="PLoS Genet.">
        <title>Adaptations to submarine hydrothermal environments exemplified by the genome of Nautilia profundicola.</title>
        <authorList>
            <person name="Campbell B.J."/>
            <person name="Smith J.L."/>
            <person name="Hanson T.E."/>
            <person name="Klotz M.G."/>
            <person name="Stein L.Y."/>
            <person name="Lee C.K."/>
            <person name="Wu D."/>
            <person name="Robinson J.M."/>
            <person name="Khouri H.M."/>
            <person name="Eisen J.A."/>
            <person name="Cary S.C."/>
        </authorList>
    </citation>
    <scope>NUCLEOTIDE SEQUENCE [LARGE SCALE GENOMIC DNA]</scope>
    <source>
        <strain>ATCC BAA-1463 / DSM 18972 / AmH</strain>
    </source>
</reference>
<organism>
    <name type="scientific">Nautilia profundicola (strain ATCC BAA-1463 / DSM 18972 / AmH)</name>
    <dbReference type="NCBI Taxonomy" id="598659"/>
    <lineage>
        <taxon>Bacteria</taxon>
        <taxon>Pseudomonadati</taxon>
        <taxon>Campylobacterota</taxon>
        <taxon>Epsilonproteobacteria</taxon>
        <taxon>Nautiliales</taxon>
        <taxon>Nautiliaceae</taxon>
        <taxon>Nautilia</taxon>
    </lineage>
</organism>
<sequence>MLLDKLKPFVEKYNEINQMLSSPEITQDIKRMTKLSREARSLEPIVEKAKEYENIINTIEEAKMMLDDPEMAELAKEELKEAEEKLPELEEEIKILLLPKDPNDDKNIFLEIRAGTGGDEAALFVGDLLKAYLRYADNKGWKVEIVSESKSDAGGYKEIILLIKGESVYSRLKYEGGTHRVQRIPATESQGRIHTSAVTVAIMPEVDDVDIELDPKDIKIEVMRAGGAGGQHVNKTESAVRMTHIPTGITVSMQDERSQQRNKEKAMQILKARVFEKLENERLAAIGEARKSQVGSGDRSERIRTYNYPQNRITDHRIGLTLYRLEQIMSEGLFDEIIDPLIAHYQAEALKEAGL</sequence>
<evidence type="ECO:0000255" key="1">
    <source>
        <dbReference type="HAMAP-Rule" id="MF_00093"/>
    </source>
</evidence>
<comment type="function">
    <text evidence="1">Peptide chain release factor 1 directs the termination of translation in response to the peptide chain termination codons UAG and UAA.</text>
</comment>
<comment type="subcellular location">
    <subcellularLocation>
        <location evidence="1">Cytoplasm</location>
    </subcellularLocation>
</comment>
<comment type="PTM">
    <text evidence="1">Methylated by PrmC. Methylation increases the termination efficiency of RF1.</text>
</comment>
<comment type="similarity">
    <text evidence="1">Belongs to the prokaryotic/mitochondrial release factor family.</text>
</comment>